<comment type="function">
    <text>May be involved in transcriptional regulation.</text>
</comment>
<comment type="subcellular location">
    <subcellularLocation>
        <location evidence="5">Nucleus</location>
    </subcellularLocation>
</comment>
<comment type="similarity">
    <text evidence="7">Belongs to the krueppel C2H2-type zinc-finger protein family.</text>
</comment>
<dbReference type="EMBL" id="DQ977365">
    <property type="protein sequence ID" value="ABM91991.1"/>
    <property type="molecule type" value="Genomic_DNA"/>
</dbReference>
<dbReference type="RefSeq" id="NP_001182195.1">
    <property type="nucleotide sequence ID" value="NM_001195266.2"/>
</dbReference>
<dbReference type="RefSeq" id="XP_009448964.1">
    <property type="nucleotide sequence ID" value="XM_009450689.5"/>
</dbReference>
<dbReference type="RefSeq" id="XP_009448965.1">
    <property type="nucleotide sequence ID" value="XM_009450690.4"/>
</dbReference>
<dbReference type="RefSeq" id="XP_016810190.1">
    <property type="nucleotide sequence ID" value="XM_016954701.1"/>
</dbReference>
<dbReference type="RefSeq" id="XP_016810191.1">
    <property type="nucleotide sequence ID" value="XM_016954702.4"/>
</dbReference>
<dbReference type="RefSeq" id="XP_054541482.1">
    <property type="nucleotide sequence ID" value="XM_054685507.1"/>
</dbReference>
<dbReference type="RefSeq" id="XP_054541483.1">
    <property type="nucleotide sequence ID" value="XM_054685508.1"/>
</dbReference>
<dbReference type="RefSeq" id="XP_063668049.1">
    <property type="nucleotide sequence ID" value="XM_063811979.1"/>
</dbReference>
<dbReference type="RefSeq" id="XP_063668050.1">
    <property type="nucleotide sequence ID" value="XM_063811980.1"/>
</dbReference>
<dbReference type="SMR" id="A2T736"/>
<dbReference type="FunCoup" id="A2T736">
    <property type="interactions" value="1476"/>
</dbReference>
<dbReference type="STRING" id="9598.ENSPTRP00000030461"/>
<dbReference type="PaxDb" id="9598-ENSPTRP00000030461"/>
<dbReference type="Ensembl" id="ENSPTRT00000032976.3">
    <property type="protein sequence ID" value="ENSPTRP00000030461.2"/>
    <property type="gene ID" value="ENSPTRG00000023125.3"/>
</dbReference>
<dbReference type="GeneID" id="471912"/>
<dbReference type="KEGG" id="ptr:471912"/>
<dbReference type="CTD" id="7745"/>
<dbReference type="VGNC" id="VGNC:7944">
    <property type="gene designation" value="ZKSCAN8"/>
</dbReference>
<dbReference type="eggNOG" id="KOG1721">
    <property type="taxonomic scope" value="Eukaryota"/>
</dbReference>
<dbReference type="GeneTree" id="ENSGT00940000161576"/>
<dbReference type="HOGENOM" id="CLU_002678_49_8_1"/>
<dbReference type="InParanoid" id="A2T736"/>
<dbReference type="OMA" id="HGWEQES"/>
<dbReference type="OrthoDB" id="1597at9604"/>
<dbReference type="TreeFam" id="TF338146"/>
<dbReference type="Proteomes" id="UP000002277">
    <property type="component" value="Chromosome 6"/>
</dbReference>
<dbReference type="Bgee" id="ENSPTRG00000023125">
    <property type="expression patterns" value="Expressed in thymus and 21 other cell types or tissues"/>
</dbReference>
<dbReference type="GO" id="GO:0005634">
    <property type="term" value="C:nucleus"/>
    <property type="evidence" value="ECO:0007669"/>
    <property type="project" value="UniProtKB-SubCell"/>
</dbReference>
<dbReference type="GO" id="GO:0000981">
    <property type="term" value="F:DNA-binding transcription factor activity, RNA polymerase II-specific"/>
    <property type="evidence" value="ECO:0000318"/>
    <property type="project" value="GO_Central"/>
</dbReference>
<dbReference type="GO" id="GO:0000978">
    <property type="term" value="F:RNA polymerase II cis-regulatory region sequence-specific DNA binding"/>
    <property type="evidence" value="ECO:0000318"/>
    <property type="project" value="GO_Central"/>
</dbReference>
<dbReference type="GO" id="GO:0008270">
    <property type="term" value="F:zinc ion binding"/>
    <property type="evidence" value="ECO:0007669"/>
    <property type="project" value="UniProtKB-KW"/>
</dbReference>
<dbReference type="GO" id="GO:0006357">
    <property type="term" value="P:regulation of transcription by RNA polymerase II"/>
    <property type="evidence" value="ECO:0000318"/>
    <property type="project" value="GO_Central"/>
</dbReference>
<dbReference type="CDD" id="cd07765">
    <property type="entry name" value="KRAB_A-box"/>
    <property type="match status" value="1"/>
</dbReference>
<dbReference type="CDD" id="cd07936">
    <property type="entry name" value="SCAN"/>
    <property type="match status" value="1"/>
</dbReference>
<dbReference type="FunFam" id="3.30.160.60:FF:004137">
    <property type="match status" value="1"/>
</dbReference>
<dbReference type="FunFam" id="3.30.160.60:FF:000198">
    <property type="entry name" value="zinc finger protein 10 isoform X1"/>
    <property type="match status" value="1"/>
</dbReference>
<dbReference type="FunFam" id="3.30.160.60:FF:000794">
    <property type="entry name" value="zinc finger protein 2 isoform X2"/>
    <property type="match status" value="1"/>
</dbReference>
<dbReference type="FunFam" id="1.10.4020.10:FF:000001">
    <property type="entry name" value="zinc finger protein 263 isoform X1"/>
    <property type="match status" value="1"/>
</dbReference>
<dbReference type="FunFam" id="3.30.160.60:FF:002402">
    <property type="entry name" value="Zinc finger protein 347"/>
    <property type="match status" value="1"/>
</dbReference>
<dbReference type="FunFam" id="3.30.160.60:FF:002254">
    <property type="entry name" value="Zinc finger protein 540"/>
    <property type="match status" value="1"/>
</dbReference>
<dbReference type="FunFam" id="3.30.160.60:FF:000737">
    <property type="entry name" value="Zinc finger protein 565"/>
    <property type="match status" value="1"/>
</dbReference>
<dbReference type="FunFam" id="3.30.160.60:FF:000427">
    <property type="entry name" value="Zinc finger with KRAB and SCAN domains 7"/>
    <property type="match status" value="1"/>
</dbReference>
<dbReference type="FunFam" id="3.30.160.60:FF:000529">
    <property type="entry name" value="Zinc finger with KRAB and SCAN domains 8"/>
    <property type="match status" value="2"/>
</dbReference>
<dbReference type="FunFam" id="3.30.160.60:FF:001403">
    <property type="entry name" value="Zinc finger with KRAB and SCAN domains 8"/>
    <property type="match status" value="1"/>
</dbReference>
<dbReference type="Gene3D" id="6.10.140.140">
    <property type="match status" value="1"/>
</dbReference>
<dbReference type="Gene3D" id="3.30.160.60">
    <property type="entry name" value="Classic Zinc Finger"/>
    <property type="match status" value="9"/>
</dbReference>
<dbReference type="Gene3D" id="1.10.4020.10">
    <property type="entry name" value="DNA breaking-rejoining enzymes"/>
    <property type="match status" value="1"/>
</dbReference>
<dbReference type="InterPro" id="IPR050589">
    <property type="entry name" value="Ikaros_C2H2-ZF"/>
</dbReference>
<dbReference type="InterPro" id="IPR001909">
    <property type="entry name" value="KRAB"/>
</dbReference>
<dbReference type="InterPro" id="IPR036051">
    <property type="entry name" value="KRAB_dom_sf"/>
</dbReference>
<dbReference type="InterPro" id="IPR003309">
    <property type="entry name" value="SCAN_dom"/>
</dbReference>
<dbReference type="InterPro" id="IPR038269">
    <property type="entry name" value="SCAN_sf"/>
</dbReference>
<dbReference type="InterPro" id="IPR036236">
    <property type="entry name" value="Znf_C2H2_sf"/>
</dbReference>
<dbReference type="InterPro" id="IPR013087">
    <property type="entry name" value="Znf_C2H2_type"/>
</dbReference>
<dbReference type="PANTHER" id="PTHR24404:SF114">
    <property type="entry name" value="KLUMPFUSS, ISOFORM B-RELATED"/>
    <property type="match status" value="1"/>
</dbReference>
<dbReference type="PANTHER" id="PTHR24404">
    <property type="entry name" value="ZINC FINGER PROTEIN"/>
    <property type="match status" value="1"/>
</dbReference>
<dbReference type="Pfam" id="PF01352">
    <property type="entry name" value="KRAB"/>
    <property type="match status" value="1"/>
</dbReference>
<dbReference type="Pfam" id="PF02023">
    <property type="entry name" value="SCAN"/>
    <property type="match status" value="1"/>
</dbReference>
<dbReference type="Pfam" id="PF00096">
    <property type="entry name" value="zf-C2H2"/>
    <property type="match status" value="9"/>
</dbReference>
<dbReference type="SMART" id="SM00349">
    <property type="entry name" value="KRAB"/>
    <property type="match status" value="1"/>
</dbReference>
<dbReference type="SMART" id="SM00431">
    <property type="entry name" value="SCAN"/>
    <property type="match status" value="1"/>
</dbReference>
<dbReference type="SMART" id="SM00355">
    <property type="entry name" value="ZnF_C2H2"/>
    <property type="match status" value="9"/>
</dbReference>
<dbReference type="SUPFAM" id="SSF57667">
    <property type="entry name" value="beta-beta-alpha zinc fingers"/>
    <property type="match status" value="5"/>
</dbReference>
<dbReference type="SUPFAM" id="SSF109640">
    <property type="entry name" value="KRAB domain (Kruppel-associated box)"/>
    <property type="match status" value="1"/>
</dbReference>
<dbReference type="SUPFAM" id="SSF47353">
    <property type="entry name" value="Retrovirus capsid dimerization domain-like"/>
    <property type="match status" value="1"/>
</dbReference>
<dbReference type="PROSITE" id="PS50805">
    <property type="entry name" value="KRAB"/>
    <property type="match status" value="1"/>
</dbReference>
<dbReference type="PROSITE" id="PS50804">
    <property type="entry name" value="SCAN_BOX"/>
    <property type="match status" value="1"/>
</dbReference>
<dbReference type="PROSITE" id="PS00028">
    <property type="entry name" value="ZINC_FINGER_C2H2_1"/>
    <property type="match status" value="9"/>
</dbReference>
<dbReference type="PROSITE" id="PS50157">
    <property type="entry name" value="ZINC_FINGER_C2H2_2"/>
    <property type="match status" value="9"/>
</dbReference>
<gene>
    <name type="primary">ZKSCAN8</name>
    <name type="synonym">ZNF192</name>
</gene>
<proteinExistence type="inferred from homology"/>
<organism>
    <name type="scientific">Pan troglodytes</name>
    <name type="common">Chimpanzee</name>
    <dbReference type="NCBI Taxonomy" id="9598"/>
    <lineage>
        <taxon>Eukaryota</taxon>
        <taxon>Metazoa</taxon>
        <taxon>Chordata</taxon>
        <taxon>Craniata</taxon>
        <taxon>Vertebrata</taxon>
        <taxon>Euteleostomi</taxon>
        <taxon>Mammalia</taxon>
        <taxon>Eutheria</taxon>
        <taxon>Euarchontoglires</taxon>
        <taxon>Primates</taxon>
        <taxon>Haplorrhini</taxon>
        <taxon>Catarrhini</taxon>
        <taxon>Hominidae</taxon>
        <taxon>Pan</taxon>
    </lineage>
</organism>
<keyword id="KW-0238">DNA-binding</keyword>
<keyword id="KW-1017">Isopeptide bond</keyword>
<keyword id="KW-0479">Metal-binding</keyword>
<keyword id="KW-0539">Nucleus</keyword>
<keyword id="KW-0597">Phosphoprotein</keyword>
<keyword id="KW-1185">Reference proteome</keyword>
<keyword id="KW-0677">Repeat</keyword>
<keyword id="KW-0804">Transcription</keyword>
<keyword id="KW-0805">Transcription regulation</keyword>
<keyword id="KW-0832">Ubl conjugation</keyword>
<keyword id="KW-0862">Zinc</keyword>
<keyword id="KW-0863">Zinc-finger</keyword>
<reference key="1">
    <citation type="submission" date="2006-08" db="EMBL/GenBank/DDBJ databases">
        <title>Positive selection in transcription factor genes on the human lineage.</title>
        <authorList>
            <person name="Nickel G.C."/>
            <person name="Tefft D.L."/>
            <person name="Trevarthen K."/>
            <person name="Funt J."/>
            <person name="Adams M.D."/>
        </authorList>
    </citation>
    <scope>NUCLEOTIDE SEQUENCE [GENOMIC DNA]</scope>
</reference>
<accession>A2T736</accession>
<feature type="chain" id="PRO_0000285471" description="Zinc finger protein with KRAB and SCAN domains 8">
    <location>
        <begin position="1"/>
        <end position="578"/>
    </location>
</feature>
<feature type="domain" description="SCAN box" evidence="5">
    <location>
        <begin position="51"/>
        <end position="133"/>
    </location>
</feature>
<feature type="domain" description="KRAB" evidence="4">
    <location>
        <begin position="220"/>
        <end position="316"/>
    </location>
</feature>
<feature type="zinc finger region" description="C2H2-type 1" evidence="3">
    <location>
        <begin position="322"/>
        <end position="344"/>
    </location>
</feature>
<feature type="zinc finger region" description="C2H2-type 2" evidence="3">
    <location>
        <begin position="350"/>
        <end position="372"/>
    </location>
</feature>
<feature type="zinc finger region" description="C2H2-type 3" evidence="3">
    <location>
        <begin position="378"/>
        <end position="400"/>
    </location>
</feature>
<feature type="zinc finger region" description="C2H2-type 4" evidence="3">
    <location>
        <begin position="406"/>
        <end position="428"/>
    </location>
</feature>
<feature type="zinc finger region" description="C2H2-type 5" evidence="3">
    <location>
        <begin position="434"/>
        <end position="456"/>
    </location>
</feature>
<feature type="zinc finger region" description="C2H2-type 6" evidence="3">
    <location>
        <begin position="462"/>
        <end position="484"/>
    </location>
</feature>
<feature type="zinc finger region" description="C2H2-type 7" evidence="3">
    <location>
        <begin position="490"/>
        <end position="512"/>
    </location>
</feature>
<feature type="zinc finger region" description="C2H2-type 8" evidence="3">
    <location>
        <begin position="518"/>
        <end position="540"/>
    </location>
</feature>
<feature type="zinc finger region" description="C2H2-type 9" evidence="3">
    <location>
        <begin position="546"/>
        <end position="568"/>
    </location>
</feature>
<feature type="region of interest" description="Disordered" evidence="6">
    <location>
        <begin position="1"/>
        <end position="20"/>
    </location>
</feature>
<feature type="region of interest" description="Disordered" evidence="6">
    <location>
        <begin position="158"/>
        <end position="205"/>
    </location>
</feature>
<feature type="compositionally biased region" description="Polar residues" evidence="6">
    <location>
        <begin position="165"/>
        <end position="205"/>
    </location>
</feature>
<feature type="modified residue" description="Phosphoserine" evidence="2">
    <location>
        <position position="12"/>
    </location>
</feature>
<feature type="modified residue" description="Phosphoserine" evidence="1">
    <location>
        <position position="201"/>
    </location>
</feature>
<feature type="cross-link" description="Glycyl lysine isopeptide (Lys-Gly) (interchain with G-Cter in SUMO2)" evidence="2">
    <location>
        <position position="26"/>
    </location>
</feature>
<feature type="cross-link" description="Glycyl lysine isopeptide (Lys-Gly) (interchain with G-Cter in SUMO2)" evidence="2">
    <location>
        <position position="176"/>
    </location>
</feature>
<feature type="cross-link" description="Glycyl lysine isopeptide (Lys-Gly) (interchain with G-Cter in SUMO2)" evidence="2">
    <location>
        <position position="199"/>
    </location>
</feature>
<feature type="cross-link" description="Glycyl lysine isopeptide (Lys-Gly) (interchain with G-Cter in SUMO2)" evidence="1">
    <location>
        <position position="221"/>
    </location>
</feature>
<feature type="cross-link" description="Glycyl lysine isopeptide (Lys-Gly) (interchain with G-Cter in SUMO2)" evidence="2">
    <location>
        <position position="272"/>
    </location>
</feature>
<feature type="cross-link" description="Glycyl lysine isopeptide (Lys-Gly) (interchain with G-Cter in SUMO2)" evidence="2">
    <location>
        <position position="288"/>
    </location>
</feature>
<feature type="cross-link" description="Glycyl lysine isopeptide (Lys-Gly) (interchain with G-Cter in SUMO2)" evidence="2">
    <location>
        <position position="374"/>
    </location>
</feature>
<feature type="cross-link" description="Glycyl lysine isopeptide (Lys-Gly) (interchain with G-Cter in SUMO2)" evidence="1">
    <location>
        <position position="376"/>
    </location>
</feature>
<feature type="cross-link" description="Glycyl lysine isopeptide (Lys-Gly) (interchain with G-Cter in SUMO2)" evidence="1">
    <location>
        <position position="413"/>
    </location>
</feature>
<feature type="cross-link" description="Glycyl lysine isopeptide (Lys-Gly) (interchain with G-Cter in SUMO2)" evidence="2">
    <location>
        <position position="441"/>
    </location>
</feature>
<feature type="cross-link" description="Glycyl lysine isopeptide (Lys-Gly) (interchain with G-Cter in SUMO2)" evidence="2">
    <location>
        <position position="502"/>
    </location>
</feature>
<feature type="cross-link" description="Glycyl lysine isopeptide (Lys-Gly) (interchain with G-Cter in SUMO2)" evidence="2">
    <location>
        <position position="572"/>
    </location>
</feature>
<sequence>MAEESRKPSAPSPPDQTPEEDLVIVKVEEDHGWDQESSLHENNPLGQEVFRLRFRQLCYQETLGPREALIQLRALCHQWLRPDLNTKEQILELLVLEQFLTILPEELQTLVKEHQLENGEEVVTLLEDLERQIDILGRPVSARVHGHRVLWEEVVHSASAPEPPNTQLQSEATQHKSPVPQESQERAMSTSQSPTRSQKGSSGDQEMTATLLTAGFQTLEKIEDMAVSLIREEWLLDPSQKDLSRDNRPEDFRNVFSLGGETRSENRELASKQVISTGIHPHGETAAKCNGDVIRGLEHEEARDLLGRLERQRGNPTQERRHKCDECGKSFAQSSGLVRHWRIHTGEKPYQCNVCGKAFSYRSALLSHQDIHNKVKRYHCKECGKAFSQNTGLILHQRIHTGEKPYQCNQCGKAFSQSAGLILHQRIHSGERPYECNECGKAFSHSSHLIGHQRIHTGEKPYECDECGKTFRRSSHLIGHQRSHTGEKPYKCNECGRAFSQKSGLIEHQRIHTGERPYKCKECGKAFNGNTGLIQHLRIHTGEKPYQCNECGKAFIQRSSLIRHQRIHSGEKSESISV</sequence>
<evidence type="ECO:0000250" key="1">
    <source>
        <dbReference type="UniProtKB" id="P17029"/>
    </source>
</evidence>
<evidence type="ECO:0000250" key="2">
    <source>
        <dbReference type="UniProtKB" id="Q15776"/>
    </source>
</evidence>
<evidence type="ECO:0000255" key="3">
    <source>
        <dbReference type="PROSITE-ProRule" id="PRU00042"/>
    </source>
</evidence>
<evidence type="ECO:0000255" key="4">
    <source>
        <dbReference type="PROSITE-ProRule" id="PRU00119"/>
    </source>
</evidence>
<evidence type="ECO:0000255" key="5">
    <source>
        <dbReference type="PROSITE-ProRule" id="PRU00187"/>
    </source>
</evidence>
<evidence type="ECO:0000256" key="6">
    <source>
        <dbReference type="SAM" id="MobiDB-lite"/>
    </source>
</evidence>
<evidence type="ECO:0000305" key="7"/>
<name>ZKSC8_PANTR</name>
<protein>
    <recommendedName>
        <fullName>Zinc finger protein with KRAB and SCAN domains 8</fullName>
    </recommendedName>
    <alternativeName>
        <fullName>Zinc finger protein 192</fullName>
    </alternativeName>
</protein>